<accession>P9WKH2</accession>
<accession>F2GKD2</accession>
<accession>O06156</accession>
<accession>Q7D578</accession>
<dbReference type="EC" id="1.14.99.57" evidence="2"/>
<dbReference type="EMBL" id="AE000516">
    <property type="protein sequence ID" value="AAK48056.1"/>
    <property type="molecule type" value="Genomic_DNA"/>
</dbReference>
<dbReference type="PIR" id="E70552">
    <property type="entry name" value="E70552"/>
</dbReference>
<dbReference type="RefSeq" id="WP_003419501.1">
    <property type="nucleotide sequence ID" value="NZ_KK341227.1"/>
</dbReference>
<dbReference type="SMR" id="P9WKH2"/>
<dbReference type="GeneID" id="45427579"/>
<dbReference type="KEGG" id="mtc:MT3698"/>
<dbReference type="PATRIC" id="fig|83331.31.peg.3981"/>
<dbReference type="HOGENOM" id="CLU_141544_1_0_11"/>
<dbReference type="Proteomes" id="UP000001020">
    <property type="component" value="Chromosome"/>
</dbReference>
<dbReference type="GO" id="GO:0046872">
    <property type="term" value="F:metal ion binding"/>
    <property type="evidence" value="ECO:0007669"/>
    <property type="project" value="UniProtKB-KW"/>
</dbReference>
<dbReference type="GO" id="GO:0004497">
    <property type="term" value="F:monooxygenase activity"/>
    <property type="evidence" value="ECO:0007669"/>
    <property type="project" value="UniProtKB-KW"/>
</dbReference>
<dbReference type="FunFam" id="3.30.70.100:FF:000048">
    <property type="entry name" value="Antibiotic biosynthesis monooxygenase"/>
    <property type="match status" value="1"/>
</dbReference>
<dbReference type="Gene3D" id="3.30.70.100">
    <property type="match status" value="1"/>
</dbReference>
<dbReference type="InterPro" id="IPR007138">
    <property type="entry name" value="ABM_dom"/>
</dbReference>
<dbReference type="InterPro" id="IPR011008">
    <property type="entry name" value="Dimeric_a/b-barrel"/>
</dbReference>
<dbReference type="InterPro" id="IPR050404">
    <property type="entry name" value="Heme-degrading_MO"/>
</dbReference>
<dbReference type="PANTHER" id="PTHR34474">
    <property type="entry name" value="SIGNAL TRANSDUCTION PROTEIN TRAP"/>
    <property type="match status" value="1"/>
</dbReference>
<dbReference type="PANTHER" id="PTHR34474:SF2">
    <property type="entry name" value="SIGNAL TRANSDUCTION PROTEIN TRAP"/>
    <property type="match status" value="1"/>
</dbReference>
<dbReference type="Pfam" id="PF03992">
    <property type="entry name" value="ABM"/>
    <property type="match status" value="1"/>
</dbReference>
<dbReference type="SUPFAM" id="SSF54909">
    <property type="entry name" value="Dimeric alpha+beta barrel"/>
    <property type="match status" value="1"/>
</dbReference>
<dbReference type="PROSITE" id="PS51725">
    <property type="entry name" value="ABM"/>
    <property type="match status" value="1"/>
</dbReference>
<evidence type="ECO:0000250" key="1"/>
<evidence type="ECO:0000250" key="2">
    <source>
        <dbReference type="UniProtKB" id="P9WKH3"/>
    </source>
</evidence>
<evidence type="ECO:0000255" key="3"/>
<evidence type="ECO:0000305" key="4"/>
<proteinExistence type="inferred from homology"/>
<reference key="1">
    <citation type="journal article" date="2002" name="J. Bacteriol.">
        <title>Whole-genome comparison of Mycobacterium tuberculosis clinical and laboratory strains.</title>
        <authorList>
            <person name="Fleischmann R.D."/>
            <person name="Alland D."/>
            <person name="Eisen J.A."/>
            <person name="Carpenter L."/>
            <person name="White O."/>
            <person name="Peterson J.D."/>
            <person name="DeBoy R.T."/>
            <person name="Dodson R.J."/>
            <person name="Gwinn M.L."/>
            <person name="Haft D.H."/>
            <person name="Hickey E.K."/>
            <person name="Kolonay J.F."/>
            <person name="Nelson W.C."/>
            <person name="Umayam L.A."/>
            <person name="Ermolaeva M.D."/>
            <person name="Salzberg S.L."/>
            <person name="Delcher A."/>
            <person name="Utterback T.R."/>
            <person name="Weidman J.F."/>
            <person name="Khouri H.M."/>
            <person name="Gill J."/>
            <person name="Mikula A."/>
            <person name="Bishai W."/>
            <person name="Jacobs W.R. Jr."/>
            <person name="Venter J.C."/>
            <person name="Fraser C.M."/>
        </authorList>
    </citation>
    <scope>NUCLEOTIDE SEQUENCE [LARGE SCALE GENOMIC DNA]</scope>
    <source>
        <strain>CDC 1551 / Oshkosh</strain>
    </source>
</reference>
<comment type="function">
    <text evidence="2">Catalyzes the oxidative degradation of the heme macrocyclic porphyrin ring in the presence of a suitable electron donor such as ascorbate or NADPH--cytochrome P450 reductase, with subsequent release of free iron.</text>
</comment>
<comment type="catalytic activity">
    <reaction evidence="2">
        <text>heme b + 3 AH2 + 3 O2 + 2 H(+) = mycobilin a + Fe(2+) + 3 A + 3 H2O</text>
        <dbReference type="Rhea" id="RHEA:52232"/>
        <dbReference type="ChEBI" id="CHEBI:13193"/>
        <dbReference type="ChEBI" id="CHEBI:15377"/>
        <dbReference type="ChEBI" id="CHEBI:15378"/>
        <dbReference type="ChEBI" id="CHEBI:15379"/>
        <dbReference type="ChEBI" id="CHEBI:17499"/>
        <dbReference type="ChEBI" id="CHEBI:29033"/>
        <dbReference type="ChEBI" id="CHEBI:60344"/>
        <dbReference type="ChEBI" id="CHEBI:136507"/>
        <dbReference type="EC" id="1.14.99.57"/>
    </reaction>
</comment>
<comment type="catalytic activity">
    <reaction evidence="2">
        <text>heme b + 3 AH2 + 3 O2 + 2 H(+) = mycobilin b + Fe(2+) + 3 A + 3 H2O</text>
        <dbReference type="Rhea" id="RHEA:52236"/>
        <dbReference type="ChEBI" id="CHEBI:13193"/>
        <dbReference type="ChEBI" id="CHEBI:15377"/>
        <dbReference type="ChEBI" id="CHEBI:15378"/>
        <dbReference type="ChEBI" id="CHEBI:15379"/>
        <dbReference type="ChEBI" id="CHEBI:17499"/>
        <dbReference type="ChEBI" id="CHEBI:29033"/>
        <dbReference type="ChEBI" id="CHEBI:60344"/>
        <dbReference type="ChEBI" id="CHEBI:136508"/>
        <dbReference type="EC" id="1.14.99.57"/>
    </reaction>
</comment>
<comment type="subunit">
    <text evidence="2">Homodimer.</text>
</comment>
<comment type="similarity">
    <text evidence="4">Belongs to the antibiotic biosynthesis monooxygenase family.</text>
</comment>
<organism>
    <name type="scientific">Mycobacterium tuberculosis (strain CDC 1551 / Oshkosh)</name>
    <dbReference type="NCBI Taxonomy" id="83331"/>
    <lineage>
        <taxon>Bacteria</taxon>
        <taxon>Bacillati</taxon>
        <taxon>Actinomycetota</taxon>
        <taxon>Actinomycetes</taxon>
        <taxon>Mycobacteriales</taxon>
        <taxon>Mycobacteriaceae</taxon>
        <taxon>Mycobacterium</taxon>
        <taxon>Mycobacterium tuberculosis complex</taxon>
    </lineage>
</organism>
<gene>
    <name type="primary">mhuD</name>
    <name type="ordered locus">MT3698</name>
</gene>
<name>MHUD_MYCTO</name>
<protein>
    <recommendedName>
        <fullName evidence="4">Heme oxygenase (mycobilin-producing)</fullName>
        <ecNumber evidence="2">1.14.99.57</ecNumber>
    </recommendedName>
    <alternativeName>
        <fullName>Mycobacterial heme utilization, degrader</fullName>
        <shortName>MHUD</shortName>
    </alternativeName>
</protein>
<keyword id="KW-0349">Heme</keyword>
<keyword id="KW-0408">Iron</keyword>
<keyword id="KW-0479">Metal-binding</keyword>
<keyword id="KW-0503">Monooxygenase</keyword>
<keyword id="KW-0560">Oxidoreductase</keyword>
<keyword id="KW-1185">Reference proteome</keyword>
<feature type="chain" id="PRO_0000427654" description="Heme oxygenase (mycobilin-producing)">
    <location>
        <begin position="1"/>
        <end position="105"/>
    </location>
</feature>
<feature type="domain" description="ABM">
    <location>
        <begin position="3"/>
        <end position="92"/>
    </location>
</feature>
<feature type="binding site" evidence="1">
    <location>
        <begin position="22"/>
        <end position="26"/>
    </location>
    <ligand>
        <name>heme</name>
        <dbReference type="ChEBI" id="CHEBI:30413"/>
    </ligand>
</feature>
<feature type="binding site" description="axial binding residue" evidence="2">
    <location>
        <position position="75"/>
    </location>
    <ligand>
        <name>heme</name>
        <dbReference type="ChEBI" id="CHEBI:30413"/>
    </ligand>
    <ligandPart>
        <name>Fe</name>
        <dbReference type="ChEBI" id="CHEBI:18248"/>
    </ligandPart>
</feature>
<feature type="binding site" evidence="1">
    <location>
        <begin position="83"/>
        <end position="86"/>
    </location>
    <ligand>
        <name>heme</name>
        <dbReference type="ChEBI" id="CHEBI:30413"/>
    </ligand>
</feature>
<feature type="site" description="Transition state stabilizer" evidence="3">
    <location>
        <position position="66"/>
    </location>
</feature>
<sequence length="105" mass="11185">MPVVKINAIEVPAGAGPELEKRFAHRAHAVENSPGFLGFQLLRPVKGEERYFVVTHWESDEAFQAWANGPAIAAHAGHRANPVATGASLLEFEVVLDVGGTGKTA</sequence>